<dbReference type="EMBL" id="AP010918">
    <property type="protein sequence ID" value="BAH25959.1"/>
    <property type="molecule type" value="Genomic_DNA"/>
</dbReference>
<dbReference type="RefSeq" id="WP_003408178.1">
    <property type="nucleotide sequence ID" value="NZ_CP014566.1"/>
</dbReference>
<dbReference type="SMR" id="C1ANT0"/>
<dbReference type="KEGG" id="mbt:JTY_1671"/>
<dbReference type="HOGENOM" id="CLU_097103_1_1_11"/>
<dbReference type="UniPathway" id="UPA00068"/>
<dbReference type="GO" id="GO:0005737">
    <property type="term" value="C:cytoplasm"/>
    <property type="evidence" value="ECO:0007669"/>
    <property type="project" value="UniProtKB-SubCell"/>
</dbReference>
<dbReference type="GO" id="GO:0034618">
    <property type="term" value="F:arginine binding"/>
    <property type="evidence" value="ECO:0007669"/>
    <property type="project" value="InterPro"/>
</dbReference>
<dbReference type="GO" id="GO:0003677">
    <property type="term" value="F:DNA binding"/>
    <property type="evidence" value="ECO:0007669"/>
    <property type="project" value="UniProtKB-KW"/>
</dbReference>
<dbReference type="GO" id="GO:0003700">
    <property type="term" value="F:DNA-binding transcription factor activity"/>
    <property type="evidence" value="ECO:0007669"/>
    <property type="project" value="UniProtKB-UniRule"/>
</dbReference>
<dbReference type="GO" id="GO:0006526">
    <property type="term" value="P:L-arginine biosynthetic process"/>
    <property type="evidence" value="ECO:0007669"/>
    <property type="project" value="UniProtKB-UniPathway"/>
</dbReference>
<dbReference type="GO" id="GO:0051259">
    <property type="term" value="P:protein complex oligomerization"/>
    <property type="evidence" value="ECO:0007669"/>
    <property type="project" value="InterPro"/>
</dbReference>
<dbReference type="GO" id="GO:1900079">
    <property type="term" value="P:regulation of arginine biosynthetic process"/>
    <property type="evidence" value="ECO:0007669"/>
    <property type="project" value="UniProtKB-UniRule"/>
</dbReference>
<dbReference type="FunFam" id="1.10.10.10:FF:000667">
    <property type="entry name" value="Arginine repressor"/>
    <property type="match status" value="1"/>
</dbReference>
<dbReference type="FunFam" id="3.30.1360.40:FF:000006">
    <property type="entry name" value="Arginine repressor"/>
    <property type="match status" value="1"/>
</dbReference>
<dbReference type="Gene3D" id="3.30.1360.40">
    <property type="match status" value="1"/>
</dbReference>
<dbReference type="Gene3D" id="1.10.10.10">
    <property type="entry name" value="Winged helix-like DNA-binding domain superfamily/Winged helix DNA-binding domain"/>
    <property type="match status" value="1"/>
</dbReference>
<dbReference type="HAMAP" id="MF_00173">
    <property type="entry name" value="Arg_repressor"/>
    <property type="match status" value="1"/>
</dbReference>
<dbReference type="InterPro" id="IPR001669">
    <property type="entry name" value="Arg_repress"/>
</dbReference>
<dbReference type="InterPro" id="IPR020899">
    <property type="entry name" value="Arg_repress_C"/>
</dbReference>
<dbReference type="InterPro" id="IPR036251">
    <property type="entry name" value="Arg_repress_C_sf"/>
</dbReference>
<dbReference type="InterPro" id="IPR020900">
    <property type="entry name" value="Arg_repress_DNA-bd"/>
</dbReference>
<dbReference type="InterPro" id="IPR036388">
    <property type="entry name" value="WH-like_DNA-bd_sf"/>
</dbReference>
<dbReference type="InterPro" id="IPR036390">
    <property type="entry name" value="WH_DNA-bd_sf"/>
</dbReference>
<dbReference type="NCBIfam" id="TIGR01529">
    <property type="entry name" value="argR_whole"/>
    <property type="match status" value="1"/>
</dbReference>
<dbReference type="NCBIfam" id="NF002880">
    <property type="entry name" value="PRK03341.1"/>
    <property type="match status" value="1"/>
</dbReference>
<dbReference type="PANTHER" id="PTHR34471">
    <property type="entry name" value="ARGININE REPRESSOR"/>
    <property type="match status" value="1"/>
</dbReference>
<dbReference type="PANTHER" id="PTHR34471:SF1">
    <property type="entry name" value="ARGININE REPRESSOR"/>
    <property type="match status" value="1"/>
</dbReference>
<dbReference type="Pfam" id="PF01316">
    <property type="entry name" value="Arg_repressor"/>
    <property type="match status" value="1"/>
</dbReference>
<dbReference type="Pfam" id="PF02863">
    <property type="entry name" value="Arg_repressor_C"/>
    <property type="match status" value="1"/>
</dbReference>
<dbReference type="PRINTS" id="PR01467">
    <property type="entry name" value="ARGREPRESSOR"/>
</dbReference>
<dbReference type="SUPFAM" id="SSF55252">
    <property type="entry name" value="C-terminal domain of arginine repressor"/>
    <property type="match status" value="1"/>
</dbReference>
<dbReference type="SUPFAM" id="SSF46785">
    <property type="entry name" value="Winged helix' DNA-binding domain"/>
    <property type="match status" value="1"/>
</dbReference>
<reference key="1">
    <citation type="journal article" date="2009" name="Vaccine">
        <title>Whole genome sequence analysis of Mycobacterium bovis bacillus Calmette-Guerin (BCG) Tokyo 172: a comparative study of BCG vaccine substrains.</title>
        <authorList>
            <person name="Seki M."/>
            <person name="Honda I."/>
            <person name="Fujita I."/>
            <person name="Yano I."/>
            <person name="Yamamoto S."/>
            <person name="Koyama A."/>
        </authorList>
    </citation>
    <scope>NUCLEOTIDE SEQUENCE [LARGE SCALE GENOMIC DNA]</scope>
    <source>
        <strain>BCG / Tokyo 172 / ATCC 35737 / TMC 1019</strain>
    </source>
</reference>
<keyword id="KW-0028">Amino-acid biosynthesis</keyword>
<keyword id="KW-0055">Arginine biosynthesis</keyword>
<keyword id="KW-0963">Cytoplasm</keyword>
<keyword id="KW-0238">DNA-binding</keyword>
<keyword id="KW-0678">Repressor</keyword>
<keyword id="KW-0804">Transcription</keyword>
<keyword id="KW-0805">Transcription regulation</keyword>
<organism>
    <name type="scientific">Mycobacterium bovis (strain BCG / Tokyo 172 / ATCC 35737 / TMC 1019)</name>
    <dbReference type="NCBI Taxonomy" id="561275"/>
    <lineage>
        <taxon>Bacteria</taxon>
        <taxon>Bacillati</taxon>
        <taxon>Actinomycetota</taxon>
        <taxon>Actinomycetes</taxon>
        <taxon>Mycobacteriales</taxon>
        <taxon>Mycobacteriaceae</taxon>
        <taxon>Mycobacterium</taxon>
        <taxon>Mycobacterium tuberculosis complex</taxon>
    </lineage>
</organism>
<feature type="chain" id="PRO_1000123801" description="Arginine repressor">
    <location>
        <begin position="1"/>
        <end position="170"/>
    </location>
</feature>
<proteinExistence type="inferred from homology"/>
<comment type="function">
    <text evidence="1">Regulates arginine biosynthesis genes.</text>
</comment>
<comment type="pathway">
    <text>Amino-acid biosynthesis; L-arginine biosynthesis [regulation].</text>
</comment>
<comment type="subcellular location">
    <subcellularLocation>
        <location evidence="1">Cytoplasm</location>
    </subcellularLocation>
</comment>
<comment type="similarity">
    <text evidence="1">Belongs to the ArgR family.</text>
</comment>
<sequence>MSRAKAAPVAGPEVAANRAGRQARIVAILSSAQVRSQNELAALLAAEGIEVTQATLSRDLEELGAVKLRGADGGTGIYVVPEDGSPVRGVSGGTDRMARLLGELLVSTDDSGNLAVLRTPPGAAHYLASAIDRAALPQVVGTIAGDDTILVVAREPTTGAQLAGMFENLR</sequence>
<gene>
    <name evidence="1" type="primary">argR</name>
    <name type="ordered locus">JTY_1671</name>
</gene>
<protein>
    <recommendedName>
        <fullName evidence="1">Arginine repressor</fullName>
    </recommendedName>
</protein>
<name>ARGR_MYCBT</name>
<evidence type="ECO:0000255" key="1">
    <source>
        <dbReference type="HAMAP-Rule" id="MF_00173"/>
    </source>
</evidence>
<accession>C1ANT0</accession>